<comment type="function">
    <text>Part of a Salmonella virulence gene cluster.</text>
</comment>
<comment type="disruption phenotype">
    <text evidence="1">Decreased virulence in mice.</text>
</comment>
<comment type="miscellaneous">
    <text>In Salmonella spp. the spv gene cluster is encoded on a highly transmissible plasmid.</text>
</comment>
<comment type="similarity">
    <text evidence="2">Belongs to the SpvD family.</text>
</comment>
<gene>
    <name type="primary">spvD</name>
    <name type="synonym">vsdE</name>
</gene>
<evidence type="ECO:0000269" key="1">
    <source>
    </source>
</evidence>
<evidence type="ECO:0000305" key="2"/>
<protein>
    <recommendedName>
        <fullName>Virulence protein SpvD</fullName>
    </recommendedName>
    <alternativeName>
        <fullName>Virulence protein VsdE</fullName>
    </alternativeName>
</protein>
<feature type="chain" id="PRO_0000221673" description="Virulence protein SpvD">
    <location>
        <begin position="1"/>
        <end position="216"/>
    </location>
</feature>
<reference key="1">
    <citation type="journal article" date="1991" name="Mol. Microbiol.">
        <title>Molecular analysis of the virulence locus of the Salmonella dublin plasmid pSDL2.</title>
        <authorList>
            <person name="Krause M."/>
            <person name="Roudier C."/>
            <person name="Fierer J."/>
            <person name="Harwood J."/>
            <person name="Guiney D."/>
        </authorList>
    </citation>
    <scope>NUCLEOTIDE SEQUENCE [GENOMIC DNA]</scope>
    <source>
        <strain>Lane</strain>
    </source>
</reference>
<reference key="2">
    <citation type="journal article" date="1992" name="J. Bacteriol.">
        <title>Characterization of translation termination mutations in the spv operon of the Salmonella virulence plasmid pSDL2.</title>
        <authorList>
            <person name="Roudier C."/>
            <person name="Fierer J."/>
            <person name="Guiney D.G."/>
        </authorList>
    </citation>
    <scope>DISRUPTION PHENOTYPE UPON MOUSE INFECTION</scope>
    <source>
        <strain>Lane</strain>
    </source>
</reference>
<organism>
    <name type="scientific">Salmonella dublin</name>
    <dbReference type="NCBI Taxonomy" id="98360"/>
    <lineage>
        <taxon>Bacteria</taxon>
        <taxon>Pseudomonadati</taxon>
        <taxon>Pseudomonadota</taxon>
        <taxon>Gammaproteobacteria</taxon>
        <taxon>Enterobacterales</taxon>
        <taxon>Enterobacteriaceae</taxon>
        <taxon>Salmonella</taxon>
    </lineage>
</organism>
<accession>P0A2N3</accession>
<accession>P24420</accession>
<dbReference type="EMBL" id="X56727">
    <property type="protein sequence ID" value="CAA40051.1"/>
    <property type="molecule type" value="Genomic_DNA"/>
</dbReference>
<dbReference type="RefSeq" id="WP_001575489.1">
    <property type="nucleotide sequence ID" value="NZ_VDCP01000013.1"/>
</dbReference>
<dbReference type="RefSeq" id="YP_001716115.1">
    <property type="nucleotide sequence ID" value="NC_010422.1"/>
</dbReference>
<dbReference type="RefSeq" id="YP_003264390.1">
    <property type="nucleotide sequence ID" value="NC_013437.1"/>
</dbReference>
<dbReference type="RefSeq" id="YP_003864187.1">
    <property type="nucleotide sequence ID" value="NC_014476.2"/>
</dbReference>
<dbReference type="RefSeq" id="YP_006954897.1">
    <property type="nucleotide sequence ID" value="NC_019106.1"/>
</dbReference>
<dbReference type="RefSeq" id="YP_006955268.1">
    <property type="nucleotide sequence ID" value="NC_019108.1"/>
</dbReference>
<dbReference type="RefSeq" id="YP_006955408.1">
    <property type="nucleotide sequence ID" value="NC_019109.1"/>
</dbReference>
<dbReference type="SMR" id="P0A2N3"/>
<dbReference type="PHI-base" id="PHI:4518"/>
<dbReference type="InterPro" id="IPR008834">
    <property type="entry name" value="Sal_SpvD"/>
</dbReference>
<dbReference type="NCBIfam" id="NF011786">
    <property type="entry name" value="PRK15250.1"/>
    <property type="match status" value="1"/>
</dbReference>
<dbReference type="Pfam" id="PF05563">
    <property type="entry name" value="SpvD"/>
    <property type="match status" value="1"/>
</dbReference>
<proteinExistence type="inferred from homology"/>
<keyword id="KW-0614">Plasmid</keyword>
<keyword id="KW-0843">Virulence</keyword>
<sequence length="216" mass="24845">MRVSGSASSQDIISRINSKNINNNDSNEVKRIKDALCIESKERILYPQNLSRDNLKQMARYVNNTYVHYSGNCVLLSACLHYNIHHRQDILSSKNTASPTVGLDSAIVDKIIFGHELNQSYCLNSIDEVEKEILNRYDIKRESSFIISAENYIAPIIGECRHDFNAVVICEYDKKPYVQFIDSWKTSNILPSLQEIKKHFSSSGEFYVRAYDEKHD</sequence>
<geneLocation type="plasmid">
    <name>pSDL2</name>
</geneLocation>
<name>SPVD_SALDU</name>